<comment type="function">
    <text evidence="1">Transcriptional activator that specifically binds 5'-GATA-3' or 5'-GAT-3' motifs within gene promoters.</text>
</comment>
<comment type="subcellular location">
    <subcellularLocation>
        <location evidence="3">Nucleus</location>
    </subcellularLocation>
</comment>
<comment type="induction">
    <text evidence="6">By drought and salt stresses.</text>
</comment>
<comment type="similarity">
    <text evidence="9">Belongs to the type IV zinc-finger family. Class C subfamily.</text>
</comment>
<evidence type="ECO:0000250" key="1">
    <source>
        <dbReference type="UniProtKB" id="Q8LAU9"/>
    </source>
</evidence>
<evidence type="ECO:0000255" key="2">
    <source>
        <dbReference type="PROSITE-ProRule" id="PRU00094"/>
    </source>
</evidence>
<evidence type="ECO:0000255" key="3">
    <source>
        <dbReference type="PROSITE-ProRule" id="PRU00357"/>
    </source>
</evidence>
<evidence type="ECO:0000255" key="4">
    <source>
        <dbReference type="PROSITE-ProRule" id="PRU00650"/>
    </source>
</evidence>
<evidence type="ECO:0000256" key="5">
    <source>
        <dbReference type="SAM" id="MobiDB-lite"/>
    </source>
</evidence>
<evidence type="ECO:0000269" key="6">
    <source>
    </source>
</evidence>
<evidence type="ECO:0000303" key="7">
    <source>
    </source>
</evidence>
<evidence type="ECO:0000303" key="8">
    <source>
    </source>
</evidence>
<evidence type="ECO:0000305" key="9"/>
<evidence type="ECO:0000312" key="10">
    <source>
        <dbReference type="EMBL" id="AAK14414.1"/>
    </source>
</evidence>
<evidence type="ECO:0000312" key="11">
    <source>
        <dbReference type="EMBL" id="ABF98240.1"/>
    </source>
</evidence>
<evidence type="ECO:0000312" key="12">
    <source>
        <dbReference type="EMBL" id="BAF12830.1"/>
    </source>
</evidence>
<evidence type="ECO:0000312" key="13">
    <source>
        <dbReference type="EMBL" id="EEE59708.1"/>
    </source>
</evidence>
<accession>Q10F25</accession>
<accession>A0A0P0W1I6</accession>
<accession>Q9AUK1</accession>
<organism>
    <name type="scientific">Oryza sativa subsp. japonica</name>
    <name type="common">Rice</name>
    <dbReference type="NCBI Taxonomy" id="39947"/>
    <lineage>
        <taxon>Eukaryota</taxon>
        <taxon>Viridiplantae</taxon>
        <taxon>Streptophyta</taxon>
        <taxon>Embryophyta</taxon>
        <taxon>Tracheophyta</taxon>
        <taxon>Spermatophyta</taxon>
        <taxon>Magnoliopsida</taxon>
        <taxon>Liliopsida</taxon>
        <taxon>Poales</taxon>
        <taxon>Poaceae</taxon>
        <taxon>BOP clade</taxon>
        <taxon>Oryzoideae</taxon>
        <taxon>Oryzeae</taxon>
        <taxon>Oryzinae</taxon>
        <taxon>Oryza</taxon>
        <taxon>Oryza sativa</taxon>
    </lineage>
</organism>
<proteinExistence type="evidence at transcript level"/>
<name>GAT18_ORYSJ</name>
<sequence length="319" mass="34124">MPDAAAAAAAAQDADAVMRDAPADAAAGGGDNDDDDGDDGTEEDEEEDDDEEGDEEELPPAEDPAAPEPVSALLPGSPNQLTLLFQGEVYVFESVTPEKVQAVLLLLGRSEMPPGLANMVLPNQRENRGYDDLLQRTDIPAKRVASLIRFREKRKERNFDKKIRYAVRKEVALRMQRRKGQFAGRANMEGESLSPGCELASQGSGQDFLSRESKCQNCGTSEKMTPAMRRGPAGPRTLCNACGLMWANKGTLRNCPKAKVESSVVATEQSNAAVSPSGIDNKELVVPNPENITASHGEVMGDSTPANEAEIGAPKAQSQ</sequence>
<protein>
    <recommendedName>
        <fullName evidence="7">GATA transcription factor 18</fullName>
        <shortName evidence="7">OsGATA18</shortName>
    </recommendedName>
    <alternativeName>
        <fullName evidence="9">Protein TIFY 1a</fullName>
        <shortName evidence="8">OsTIFY1a</shortName>
    </alternativeName>
</protein>
<reference key="1">
    <citation type="journal article" date="2005" name="Genome Res.">
        <title>Sequence, annotation, and analysis of synteny between rice chromosome 3 and diverged grass species.</title>
        <authorList>
            <consortium name="The rice chromosome 3 sequencing consortium"/>
            <person name="Buell C.R."/>
            <person name="Yuan Q."/>
            <person name="Ouyang S."/>
            <person name="Liu J."/>
            <person name="Zhu W."/>
            <person name="Wang A."/>
            <person name="Maiti R."/>
            <person name="Haas B."/>
            <person name="Wortman J."/>
            <person name="Pertea M."/>
            <person name="Jones K.M."/>
            <person name="Kim M."/>
            <person name="Overton L."/>
            <person name="Tsitrin T."/>
            <person name="Fadrosh D."/>
            <person name="Bera J."/>
            <person name="Weaver B."/>
            <person name="Jin S."/>
            <person name="Johri S."/>
            <person name="Reardon M."/>
            <person name="Webb K."/>
            <person name="Hill J."/>
            <person name="Moffat K."/>
            <person name="Tallon L."/>
            <person name="Van Aken S."/>
            <person name="Lewis M."/>
            <person name="Utterback T."/>
            <person name="Feldblyum T."/>
            <person name="Zismann V."/>
            <person name="Iobst S."/>
            <person name="Hsiao J."/>
            <person name="de Vazeille A.R."/>
            <person name="Salzberg S.L."/>
            <person name="White O."/>
            <person name="Fraser C.M."/>
            <person name="Yu Y."/>
            <person name="Kim H."/>
            <person name="Rambo T."/>
            <person name="Currie J."/>
            <person name="Collura K."/>
            <person name="Kernodle-Thompson S."/>
            <person name="Wei F."/>
            <person name="Kudrna K."/>
            <person name="Ammiraju J.S.S."/>
            <person name="Luo M."/>
            <person name="Goicoechea J.L."/>
            <person name="Wing R.A."/>
            <person name="Henry D."/>
            <person name="Oates R."/>
            <person name="Palmer M."/>
            <person name="Pries G."/>
            <person name="Saski C."/>
            <person name="Simmons J."/>
            <person name="Soderlund C."/>
            <person name="Nelson W."/>
            <person name="de la Bastide M."/>
            <person name="Spiegel L."/>
            <person name="Nascimento L."/>
            <person name="Huang E."/>
            <person name="Preston R."/>
            <person name="Zutavern T."/>
            <person name="Palmer L."/>
            <person name="O'Shaughnessy A."/>
            <person name="Dike S."/>
            <person name="McCombie W.R."/>
            <person name="Minx P."/>
            <person name="Cordum H."/>
            <person name="Wilson R."/>
            <person name="Jin W."/>
            <person name="Lee H.R."/>
            <person name="Jiang J."/>
            <person name="Jackson S."/>
        </authorList>
    </citation>
    <scope>NUCLEOTIDE SEQUENCE [LARGE SCALE GENOMIC DNA]</scope>
    <source>
        <strain>cv. Nipponbare</strain>
    </source>
</reference>
<reference key="2">
    <citation type="journal article" date="2005" name="Nature">
        <title>The map-based sequence of the rice genome.</title>
        <authorList>
            <consortium name="International rice genome sequencing project (IRGSP)"/>
        </authorList>
    </citation>
    <scope>NUCLEOTIDE SEQUENCE [LARGE SCALE GENOMIC DNA]</scope>
    <source>
        <strain>cv. Nipponbare</strain>
    </source>
</reference>
<reference key="3">
    <citation type="journal article" date="2008" name="Nucleic Acids Res.">
        <title>The rice annotation project database (RAP-DB): 2008 update.</title>
        <authorList>
            <consortium name="The rice annotation project (RAP)"/>
        </authorList>
    </citation>
    <scope>GENOME REANNOTATION</scope>
    <source>
        <strain>cv. Nipponbare</strain>
    </source>
</reference>
<reference key="4">
    <citation type="journal article" date="2013" name="Rice">
        <title>Improvement of the Oryza sativa Nipponbare reference genome using next generation sequence and optical map data.</title>
        <authorList>
            <person name="Kawahara Y."/>
            <person name="de la Bastide M."/>
            <person name="Hamilton J.P."/>
            <person name="Kanamori H."/>
            <person name="McCombie W.R."/>
            <person name="Ouyang S."/>
            <person name="Schwartz D.C."/>
            <person name="Tanaka T."/>
            <person name="Wu J."/>
            <person name="Zhou S."/>
            <person name="Childs K.L."/>
            <person name="Davidson R.M."/>
            <person name="Lin H."/>
            <person name="Quesada-Ocampo L."/>
            <person name="Vaillancourt B."/>
            <person name="Sakai H."/>
            <person name="Lee S.S."/>
            <person name="Kim J."/>
            <person name="Numa H."/>
            <person name="Itoh T."/>
            <person name="Buell C.R."/>
            <person name="Matsumoto T."/>
        </authorList>
    </citation>
    <scope>GENOME REANNOTATION</scope>
    <source>
        <strain>cv. Nipponbare</strain>
    </source>
</reference>
<reference key="5">
    <citation type="journal article" date="2005" name="PLoS Biol.">
        <title>The genomes of Oryza sativa: a history of duplications.</title>
        <authorList>
            <person name="Yu J."/>
            <person name="Wang J."/>
            <person name="Lin W."/>
            <person name="Li S."/>
            <person name="Li H."/>
            <person name="Zhou J."/>
            <person name="Ni P."/>
            <person name="Dong W."/>
            <person name="Hu S."/>
            <person name="Zeng C."/>
            <person name="Zhang J."/>
            <person name="Zhang Y."/>
            <person name="Li R."/>
            <person name="Xu Z."/>
            <person name="Li S."/>
            <person name="Li X."/>
            <person name="Zheng H."/>
            <person name="Cong L."/>
            <person name="Lin L."/>
            <person name="Yin J."/>
            <person name="Geng J."/>
            <person name="Li G."/>
            <person name="Shi J."/>
            <person name="Liu J."/>
            <person name="Lv H."/>
            <person name="Li J."/>
            <person name="Wang J."/>
            <person name="Deng Y."/>
            <person name="Ran L."/>
            <person name="Shi X."/>
            <person name="Wang X."/>
            <person name="Wu Q."/>
            <person name="Li C."/>
            <person name="Ren X."/>
            <person name="Wang J."/>
            <person name="Wang X."/>
            <person name="Li D."/>
            <person name="Liu D."/>
            <person name="Zhang X."/>
            <person name="Ji Z."/>
            <person name="Zhao W."/>
            <person name="Sun Y."/>
            <person name="Zhang Z."/>
            <person name="Bao J."/>
            <person name="Han Y."/>
            <person name="Dong L."/>
            <person name="Ji J."/>
            <person name="Chen P."/>
            <person name="Wu S."/>
            <person name="Liu J."/>
            <person name="Xiao Y."/>
            <person name="Bu D."/>
            <person name="Tan J."/>
            <person name="Yang L."/>
            <person name="Ye C."/>
            <person name="Zhang J."/>
            <person name="Xu J."/>
            <person name="Zhou Y."/>
            <person name="Yu Y."/>
            <person name="Zhang B."/>
            <person name="Zhuang S."/>
            <person name="Wei H."/>
            <person name="Liu B."/>
            <person name="Lei M."/>
            <person name="Yu H."/>
            <person name="Li Y."/>
            <person name="Xu H."/>
            <person name="Wei S."/>
            <person name="He X."/>
            <person name="Fang L."/>
            <person name="Zhang Z."/>
            <person name="Zhang Y."/>
            <person name="Huang X."/>
            <person name="Su Z."/>
            <person name="Tong W."/>
            <person name="Li J."/>
            <person name="Tong Z."/>
            <person name="Li S."/>
            <person name="Ye J."/>
            <person name="Wang L."/>
            <person name="Fang L."/>
            <person name="Lei T."/>
            <person name="Chen C.-S."/>
            <person name="Chen H.-C."/>
            <person name="Xu Z."/>
            <person name="Li H."/>
            <person name="Huang H."/>
            <person name="Zhang F."/>
            <person name="Xu H."/>
            <person name="Li N."/>
            <person name="Zhao C."/>
            <person name="Li S."/>
            <person name="Dong L."/>
            <person name="Huang Y."/>
            <person name="Li L."/>
            <person name="Xi Y."/>
            <person name="Qi Q."/>
            <person name="Li W."/>
            <person name="Zhang B."/>
            <person name="Hu W."/>
            <person name="Zhang Y."/>
            <person name="Tian X."/>
            <person name="Jiao Y."/>
            <person name="Liang X."/>
            <person name="Jin J."/>
            <person name="Gao L."/>
            <person name="Zheng W."/>
            <person name="Hao B."/>
            <person name="Liu S.-M."/>
            <person name="Wang W."/>
            <person name="Yuan L."/>
            <person name="Cao M."/>
            <person name="McDermott J."/>
            <person name="Samudrala R."/>
            <person name="Wang J."/>
            <person name="Wong G.K.-S."/>
            <person name="Yang H."/>
        </authorList>
    </citation>
    <scope>NUCLEOTIDE SEQUENCE [LARGE SCALE GENOMIC DNA]</scope>
    <source>
        <strain>cv. Nipponbare</strain>
    </source>
</reference>
<reference key="6">
    <citation type="journal article" date="2003" name="Science">
        <title>Collection, mapping, and annotation of over 28,000 cDNA clones from japonica rice.</title>
        <authorList>
            <consortium name="The rice full-length cDNA consortium"/>
        </authorList>
    </citation>
    <scope>NUCLEOTIDE SEQUENCE [LARGE SCALE MRNA]</scope>
    <source>
        <strain>cv. Nipponbare</strain>
    </source>
</reference>
<reference key="7">
    <citation type="journal article" date="2004" name="Plant Physiol.">
        <title>The GATA family of transcription factors in Arabidopsis and rice.</title>
        <authorList>
            <person name="Reyes J.C."/>
            <person name="Muro-Pastor M.I."/>
            <person name="Florencio F.J."/>
        </authorList>
    </citation>
    <scope>GENE FAMILY</scope>
    <scope>NOMENCLATURE</scope>
</reference>
<reference key="8">
    <citation type="journal article" date="2009" name="Plant Mol. Biol.">
        <title>Identification and expression profiling analysis of TIFY family genes involved in stress and phytohormone responses in rice.</title>
        <authorList>
            <person name="Ye H."/>
            <person name="Du H."/>
            <person name="Tang N."/>
            <person name="Li X."/>
            <person name="Xiong L."/>
        </authorList>
    </citation>
    <scope>GENE FAMILY</scope>
    <scope>NOMENCLATURE</scope>
    <scope>INDUCTION</scope>
</reference>
<gene>
    <name evidence="7" type="primary">GATA18</name>
    <name evidence="8" type="synonym">TIFY1A</name>
    <name evidence="12" type="ordered locus">Os03g0684000</name>
    <name evidence="11" type="ordered locus">LOC_Os03g47970</name>
    <name evidence="13" type="ORF">OsJ_12136</name>
    <name evidence="10" type="ORF">OSJNBb0072E24.6</name>
</gene>
<keyword id="KW-0010">Activator</keyword>
<keyword id="KW-0238">DNA-binding</keyword>
<keyword id="KW-0479">Metal-binding</keyword>
<keyword id="KW-0539">Nucleus</keyword>
<keyword id="KW-1185">Reference proteome</keyword>
<keyword id="KW-0804">Transcription</keyword>
<keyword id="KW-0805">Transcription regulation</keyword>
<keyword id="KW-0862">Zinc</keyword>
<keyword id="KW-0863">Zinc-finger</keyword>
<dbReference type="EMBL" id="AC087851">
    <property type="protein sequence ID" value="AAK14414.1"/>
    <property type="molecule type" value="Genomic_DNA"/>
</dbReference>
<dbReference type="EMBL" id="DP000009">
    <property type="protein sequence ID" value="ABF98240.1"/>
    <property type="molecule type" value="Genomic_DNA"/>
</dbReference>
<dbReference type="EMBL" id="AP008209">
    <property type="protein sequence ID" value="BAF12830.1"/>
    <property type="molecule type" value="Genomic_DNA"/>
</dbReference>
<dbReference type="EMBL" id="AP014959">
    <property type="protein sequence ID" value="BAS85787.1"/>
    <property type="molecule type" value="Genomic_DNA"/>
</dbReference>
<dbReference type="EMBL" id="CM000140">
    <property type="protein sequence ID" value="EEE59708.1"/>
    <property type="molecule type" value="Genomic_DNA"/>
</dbReference>
<dbReference type="EMBL" id="AK105025">
    <property type="status" value="NOT_ANNOTATED_CDS"/>
    <property type="molecule type" value="mRNA"/>
</dbReference>
<dbReference type="RefSeq" id="XP_015628049.1">
    <property type="nucleotide sequence ID" value="XM_015772563.1"/>
</dbReference>
<dbReference type="SMR" id="Q10F25"/>
<dbReference type="STRING" id="39947.Q10F25"/>
<dbReference type="PaxDb" id="39947-Q10F25"/>
<dbReference type="EnsemblPlants" id="Os03t0684000-01">
    <property type="protein sequence ID" value="Os03t0684000-01"/>
    <property type="gene ID" value="Os03g0684000"/>
</dbReference>
<dbReference type="Gramene" id="Os03t0684000-01">
    <property type="protein sequence ID" value="Os03t0684000-01"/>
    <property type="gene ID" value="Os03g0684000"/>
</dbReference>
<dbReference type="KEGG" id="dosa:Os03g0684000"/>
<dbReference type="eggNOG" id="KOG1601">
    <property type="taxonomic scope" value="Eukaryota"/>
</dbReference>
<dbReference type="HOGENOM" id="CLU_057264_1_2_1"/>
<dbReference type="InParanoid" id="Q10F25"/>
<dbReference type="OMA" id="QHENRGY"/>
<dbReference type="OrthoDB" id="2162994at2759"/>
<dbReference type="PlantReactome" id="R-OSA-6787011">
    <property type="pathway name" value="Jasmonic acid signaling"/>
</dbReference>
<dbReference type="Proteomes" id="UP000000763">
    <property type="component" value="Chromosome 3"/>
</dbReference>
<dbReference type="Proteomes" id="UP000007752">
    <property type="component" value="Chromosome 3"/>
</dbReference>
<dbReference type="Proteomes" id="UP000059680">
    <property type="component" value="Chromosome 3"/>
</dbReference>
<dbReference type="GO" id="GO:0005634">
    <property type="term" value="C:nucleus"/>
    <property type="evidence" value="ECO:0007669"/>
    <property type="project" value="UniProtKB-SubCell"/>
</dbReference>
<dbReference type="GO" id="GO:0043565">
    <property type="term" value="F:sequence-specific DNA binding"/>
    <property type="evidence" value="ECO:0007669"/>
    <property type="project" value="InterPro"/>
</dbReference>
<dbReference type="GO" id="GO:0008270">
    <property type="term" value="F:zinc ion binding"/>
    <property type="evidence" value="ECO:0007669"/>
    <property type="project" value="UniProtKB-KW"/>
</dbReference>
<dbReference type="GO" id="GO:0006355">
    <property type="term" value="P:regulation of DNA-templated transcription"/>
    <property type="evidence" value="ECO:0007669"/>
    <property type="project" value="InterPro"/>
</dbReference>
<dbReference type="CDD" id="cd00202">
    <property type="entry name" value="ZnF_GATA"/>
    <property type="match status" value="1"/>
</dbReference>
<dbReference type="Gene3D" id="3.30.50.10">
    <property type="entry name" value="Erythroid Transcription Factor GATA-1, subunit A"/>
    <property type="match status" value="1"/>
</dbReference>
<dbReference type="InterPro" id="IPR010402">
    <property type="entry name" value="CCT_domain"/>
</dbReference>
<dbReference type="InterPro" id="IPR045280">
    <property type="entry name" value="TIFY-like"/>
</dbReference>
<dbReference type="InterPro" id="IPR010399">
    <property type="entry name" value="Tify_dom"/>
</dbReference>
<dbReference type="InterPro" id="IPR000679">
    <property type="entry name" value="Znf_GATA"/>
</dbReference>
<dbReference type="InterPro" id="IPR013088">
    <property type="entry name" value="Znf_NHR/GATA"/>
</dbReference>
<dbReference type="PANTHER" id="PTHR46125:SF24">
    <property type="entry name" value="GATA TRANSCRIPTION FACTOR 18"/>
    <property type="match status" value="1"/>
</dbReference>
<dbReference type="PANTHER" id="PTHR46125">
    <property type="entry name" value="GATA TRANSCRIPTION FACTOR 28"/>
    <property type="match status" value="1"/>
</dbReference>
<dbReference type="Pfam" id="PF06203">
    <property type="entry name" value="CCT"/>
    <property type="match status" value="1"/>
</dbReference>
<dbReference type="Pfam" id="PF00320">
    <property type="entry name" value="GATA"/>
    <property type="match status" value="1"/>
</dbReference>
<dbReference type="Pfam" id="PF06200">
    <property type="entry name" value="tify"/>
    <property type="match status" value="1"/>
</dbReference>
<dbReference type="SMART" id="SM00979">
    <property type="entry name" value="TIFY"/>
    <property type="match status" value="1"/>
</dbReference>
<dbReference type="SMART" id="SM00401">
    <property type="entry name" value="ZnF_GATA"/>
    <property type="match status" value="1"/>
</dbReference>
<dbReference type="SUPFAM" id="SSF57716">
    <property type="entry name" value="Glucocorticoid receptor-like (DNA-binding domain)"/>
    <property type="match status" value="1"/>
</dbReference>
<dbReference type="PROSITE" id="PS51017">
    <property type="entry name" value="CCT"/>
    <property type="match status" value="1"/>
</dbReference>
<dbReference type="PROSITE" id="PS00344">
    <property type="entry name" value="GATA_ZN_FINGER_1"/>
    <property type="match status" value="1"/>
</dbReference>
<dbReference type="PROSITE" id="PS50114">
    <property type="entry name" value="GATA_ZN_FINGER_2"/>
    <property type="match status" value="1"/>
</dbReference>
<dbReference type="PROSITE" id="PS51320">
    <property type="entry name" value="TIFY"/>
    <property type="match status" value="1"/>
</dbReference>
<feature type="chain" id="PRO_0000434834" description="GATA transcription factor 18">
    <location>
        <begin position="1"/>
        <end position="319"/>
    </location>
</feature>
<feature type="domain" description="Tify" evidence="4">
    <location>
        <begin position="74"/>
        <end position="109"/>
    </location>
</feature>
<feature type="domain" description="CCT" evidence="3">
    <location>
        <begin position="143"/>
        <end position="185"/>
    </location>
</feature>
<feature type="zinc finger region" description="GATA-type" evidence="2">
    <location>
        <begin position="215"/>
        <end position="242"/>
    </location>
</feature>
<feature type="region of interest" description="Disordered" evidence="5">
    <location>
        <begin position="1"/>
        <end position="74"/>
    </location>
</feature>
<feature type="region of interest" description="Disordered" evidence="5">
    <location>
        <begin position="292"/>
        <end position="319"/>
    </location>
</feature>
<feature type="compositionally biased region" description="Low complexity" evidence="5">
    <location>
        <begin position="1"/>
        <end position="15"/>
    </location>
</feature>
<feature type="compositionally biased region" description="Acidic residues" evidence="5">
    <location>
        <begin position="31"/>
        <end position="60"/>
    </location>
</feature>
<feature type="sequence conflict" description="In Ref. 6; AK105025." evidence="9" ref="6">
    <original>T</original>
    <variation>M</variation>
    <location>
        <position position="96"/>
    </location>
</feature>